<proteinExistence type="inferred from homology"/>
<feature type="chain" id="PRO_0000104669" description="Large ribosomal subunit protein uL15">
    <location>
        <begin position="1"/>
        <end position="146"/>
    </location>
</feature>
<feature type="region of interest" description="Disordered" evidence="2">
    <location>
        <begin position="1"/>
        <end position="52"/>
    </location>
</feature>
<feature type="compositionally biased region" description="Basic and acidic residues" evidence="2">
    <location>
        <begin position="1"/>
        <end position="13"/>
    </location>
</feature>
<feature type="compositionally biased region" description="Gly residues" evidence="2">
    <location>
        <begin position="21"/>
        <end position="31"/>
    </location>
</feature>
<feature type="compositionally biased region" description="Gly residues" evidence="2">
    <location>
        <begin position="42"/>
        <end position="52"/>
    </location>
</feature>
<dbReference type="EMBL" id="CP000001">
    <property type="protein sequence ID" value="AAU20108.1"/>
    <property type="molecule type" value="Genomic_DNA"/>
</dbReference>
<dbReference type="RefSeq" id="WP_000766080.1">
    <property type="nucleotide sequence ID" value="NZ_CP009968.1"/>
</dbReference>
<dbReference type="SMR" id="Q63H71"/>
<dbReference type="GeneID" id="93010924"/>
<dbReference type="KEGG" id="bcz:BCE33L0123"/>
<dbReference type="PATRIC" id="fig|288681.22.peg.28"/>
<dbReference type="Proteomes" id="UP000002612">
    <property type="component" value="Chromosome"/>
</dbReference>
<dbReference type="GO" id="GO:0022625">
    <property type="term" value="C:cytosolic large ribosomal subunit"/>
    <property type="evidence" value="ECO:0007669"/>
    <property type="project" value="TreeGrafter"/>
</dbReference>
<dbReference type="GO" id="GO:0019843">
    <property type="term" value="F:rRNA binding"/>
    <property type="evidence" value="ECO:0007669"/>
    <property type="project" value="UniProtKB-UniRule"/>
</dbReference>
<dbReference type="GO" id="GO:0003735">
    <property type="term" value="F:structural constituent of ribosome"/>
    <property type="evidence" value="ECO:0007669"/>
    <property type="project" value="InterPro"/>
</dbReference>
<dbReference type="GO" id="GO:0006412">
    <property type="term" value="P:translation"/>
    <property type="evidence" value="ECO:0007669"/>
    <property type="project" value="UniProtKB-UniRule"/>
</dbReference>
<dbReference type="FunFam" id="3.100.10.10:FF:000004">
    <property type="entry name" value="50S ribosomal protein L15"/>
    <property type="match status" value="1"/>
</dbReference>
<dbReference type="Gene3D" id="3.100.10.10">
    <property type="match status" value="1"/>
</dbReference>
<dbReference type="HAMAP" id="MF_01341">
    <property type="entry name" value="Ribosomal_uL15"/>
    <property type="match status" value="1"/>
</dbReference>
<dbReference type="InterPro" id="IPR030878">
    <property type="entry name" value="Ribosomal_uL15"/>
</dbReference>
<dbReference type="InterPro" id="IPR021131">
    <property type="entry name" value="Ribosomal_uL15/eL18"/>
</dbReference>
<dbReference type="InterPro" id="IPR036227">
    <property type="entry name" value="Ribosomal_uL15/eL18_sf"/>
</dbReference>
<dbReference type="InterPro" id="IPR005749">
    <property type="entry name" value="Ribosomal_uL15_bac-type"/>
</dbReference>
<dbReference type="InterPro" id="IPR001196">
    <property type="entry name" value="Ribosomal_uL15_CS"/>
</dbReference>
<dbReference type="NCBIfam" id="TIGR01071">
    <property type="entry name" value="rplO_bact"/>
    <property type="match status" value="1"/>
</dbReference>
<dbReference type="PANTHER" id="PTHR12934">
    <property type="entry name" value="50S RIBOSOMAL PROTEIN L15"/>
    <property type="match status" value="1"/>
</dbReference>
<dbReference type="PANTHER" id="PTHR12934:SF11">
    <property type="entry name" value="LARGE RIBOSOMAL SUBUNIT PROTEIN UL15M"/>
    <property type="match status" value="1"/>
</dbReference>
<dbReference type="Pfam" id="PF00828">
    <property type="entry name" value="Ribosomal_L27A"/>
    <property type="match status" value="1"/>
</dbReference>
<dbReference type="SUPFAM" id="SSF52080">
    <property type="entry name" value="Ribosomal proteins L15p and L18e"/>
    <property type="match status" value="1"/>
</dbReference>
<dbReference type="PROSITE" id="PS00475">
    <property type="entry name" value="RIBOSOMAL_L15"/>
    <property type="match status" value="1"/>
</dbReference>
<protein>
    <recommendedName>
        <fullName evidence="1">Large ribosomal subunit protein uL15</fullName>
    </recommendedName>
    <alternativeName>
        <fullName evidence="3">50S ribosomal protein L15</fullName>
    </alternativeName>
</protein>
<accession>Q63H71</accession>
<gene>
    <name evidence="1" type="primary">rplO</name>
    <name type="ordered locus">BCE33L0123</name>
</gene>
<keyword id="KW-0687">Ribonucleoprotein</keyword>
<keyword id="KW-0689">Ribosomal protein</keyword>
<keyword id="KW-0694">RNA-binding</keyword>
<keyword id="KW-0699">rRNA-binding</keyword>
<evidence type="ECO:0000255" key="1">
    <source>
        <dbReference type="HAMAP-Rule" id="MF_01341"/>
    </source>
</evidence>
<evidence type="ECO:0000256" key="2">
    <source>
        <dbReference type="SAM" id="MobiDB-lite"/>
    </source>
</evidence>
<evidence type="ECO:0000305" key="3"/>
<reference key="1">
    <citation type="journal article" date="2006" name="J. Bacteriol.">
        <title>Pathogenomic sequence analysis of Bacillus cereus and Bacillus thuringiensis isolates closely related to Bacillus anthracis.</title>
        <authorList>
            <person name="Han C.S."/>
            <person name="Xie G."/>
            <person name="Challacombe J.F."/>
            <person name="Altherr M.R."/>
            <person name="Bhotika S.S."/>
            <person name="Bruce D."/>
            <person name="Campbell C.S."/>
            <person name="Campbell M.L."/>
            <person name="Chen J."/>
            <person name="Chertkov O."/>
            <person name="Cleland C."/>
            <person name="Dimitrijevic M."/>
            <person name="Doggett N.A."/>
            <person name="Fawcett J.J."/>
            <person name="Glavina T."/>
            <person name="Goodwin L.A."/>
            <person name="Hill K.K."/>
            <person name="Hitchcock P."/>
            <person name="Jackson P.J."/>
            <person name="Keim P."/>
            <person name="Kewalramani A.R."/>
            <person name="Longmire J."/>
            <person name="Lucas S."/>
            <person name="Malfatti S."/>
            <person name="McMurry K."/>
            <person name="Meincke L.J."/>
            <person name="Misra M."/>
            <person name="Moseman B.L."/>
            <person name="Mundt M."/>
            <person name="Munk A.C."/>
            <person name="Okinaka R.T."/>
            <person name="Parson-Quintana B."/>
            <person name="Reilly L.P."/>
            <person name="Richardson P."/>
            <person name="Robinson D.L."/>
            <person name="Rubin E."/>
            <person name="Saunders E."/>
            <person name="Tapia R."/>
            <person name="Tesmer J.G."/>
            <person name="Thayer N."/>
            <person name="Thompson L.S."/>
            <person name="Tice H."/>
            <person name="Ticknor L.O."/>
            <person name="Wills P.L."/>
            <person name="Brettin T.S."/>
            <person name="Gilna P."/>
        </authorList>
    </citation>
    <scope>NUCLEOTIDE SEQUENCE [LARGE SCALE GENOMIC DNA]</scope>
    <source>
        <strain>ZK / E33L</strain>
    </source>
</reference>
<name>RL15_BACCZ</name>
<comment type="function">
    <text evidence="1">Binds to the 23S rRNA.</text>
</comment>
<comment type="subunit">
    <text evidence="1">Part of the 50S ribosomal subunit.</text>
</comment>
<comment type="similarity">
    <text evidence="1">Belongs to the universal ribosomal protein uL15 family.</text>
</comment>
<organism>
    <name type="scientific">Bacillus cereus (strain ZK / E33L)</name>
    <dbReference type="NCBI Taxonomy" id="288681"/>
    <lineage>
        <taxon>Bacteria</taxon>
        <taxon>Bacillati</taxon>
        <taxon>Bacillota</taxon>
        <taxon>Bacilli</taxon>
        <taxon>Bacillales</taxon>
        <taxon>Bacillaceae</taxon>
        <taxon>Bacillus</taxon>
        <taxon>Bacillus cereus group</taxon>
    </lineage>
</organism>
<sequence>MKLHELKPAEGSRKVRNRVGRGIGSGNGKTAGKGHKGQNARSGGGVRLGFEGGQTPLFRRLPKRGFTNINRKEFAIVNLSTLNRFEDGTEVTPELLLETGVISKLNDGVKILASGAVEKKLTVKAHKFSSSAKEAIEAAGGSVEVI</sequence>